<sequence length="75" mass="8637">MLILSRKTNQKILIGDDIEITIIDIRGDQVKIGVDAPPSVKVFREEIYQEIQNENRAALVRDTELNLPELHIKKK</sequence>
<dbReference type="EMBL" id="AE017226">
    <property type="protein sequence ID" value="AAS12873.1"/>
    <property type="molecule type" value="Genomic_DNA"/>
</dbReference>
<dbReference type="RefSeq" id="NP_972954.1">
    <property type="nucleotide sequence ID" value="NC_002967.9"/>
</dbReference>
<dbReference type="RefSeq" id="WP_002667708.1">
    <property type="nucleotide sequence ID" value="NC_002967.9"/>
</dbReference>
<dbReference type="SMR" id="Q73K67"/>
<dbReference type="STRING" id="243275.TDE_2355"/>
<dbReference type="PaxDb" id="243275-TDE_2355"/>
<dbReference type="GeneID" id="2739964"/>
<dbReference type="KEGG" id="tde:TDE_2355"/>
<dbReference type="PATRIC" id="fig|243275.7.peg.2223"/>
<dbReference type="eggNOG" id="COG1551">
    <property type="taxonomic scope" value="Bacteria"/>
</dbReference>
<dbReference type="HOGENOM" id="CLU_164837_0_0_12"/>
<dbReference type="OrthoDB" id="9809061at2"/>
<dbReference type="Proteomes" id="UP000008212">
    <property type="component" value="Chromosome"/>
</dbReference>
<dbReference type="GO" id="GO:0005829">
    <property type="term" value="C:cytosol"/>
    <property type="evidence" value="ECO:0007669"/>
    <property type="project" value="TreeGrafter"/>
</dbReference>
<dbReference type="GO" id="GO:0048027">
    <property type="term" value="F:mRNA 5'-UTR binding"/>
    <property type="evidence" value="ECO:0007669"/>
    <property type="project" value="UniProtKB-UniRule"/>
</dbReference>
<dbReference type="GO" id="GO:0044781">
    <property type="term" value="P:bacterial-type flagellum organization"/>
    <property type="evidence" value="ECO:0007669"/>
    <property type="project" value="UniProtKB-KW"/>
</dbReference>
<dbReference type="GO" id="GO:0006402">
    <property type="term" value="P:mRNA catabolic process"/>
    <property type="evidence" value="ECO:0007669"/>
    <property type="project" value="InterPro"/>
</dbReference>
<dbReference type="GO" id="GO:0045947">
    <property type="term" value="P:negative regulation of translational initiation"/>
    <property type="evidence" value="ECO:0007669"/>
    <property type="project" value="UniProtKB-UniRule"/>
</dbReference>
<dbReference type="GO" id="GO:1902208">
    <property type="term" value="P:regulation of bacterial-type flagellum assembly"/>
    <property type="evidence" value="ECO:0007669"/>
    <property type="project" value="UniProtKB-UniRule"/>
</dbReference>
<dbReference type="GO" id="GO:0006109">
    <property type="term" value="P:regulation of carbohydrate metabolic process"/>
    <property type="evidence" value="ECO:0007669"/>
    <property type="project" value="InterPro"/>
</dbReference>
<dbReference type="FunFam" id="2.60.40.4380:FF:000002">
    <property type="entry name" value="Translational regulator CsrA"/>
    <property type="match status" value="1"/>
</dbReference>
<dbReference type="Gene3D" id="2.60.40.4380">
    <property type="entry name" value="Translational regulator CsrA"/>
    <property type="match status" value="1"/>
</dbReference>
<dbReference type="HAMAP" id="MF_00167">
    <property type="entry name" value="CsrA"/>
    <property type="match status" value="1"/>
</dbReference>
<dbReference type="InterPro" id="IPR003751">
    <property type="entry name" value="CsrA"/>
</dbReference>
<dbReference type="InterPro" id="IPR036107">
    <property type="entry name" value="CsrA_sf"/>
</dbReference>
<dbReference type="NCBIfam" id="TIGR00202">
    <property type="entry name" value="csrA"/>
    <property type="match status" value="1"/>
</dbReference>
<dbReference type="NCBIfam" id="NF002469">
    <property type="entry name" value="PRK01712.1"/>
    <property type="match status" value="1"/>
</dbReference>
<dbReference type="PANTHER" id="PTHR34984">
    <property type="entry name" value="CARBON STORAGE REGULATOR"/>
    <property type="match status" value="1"/>
</dbReference>
<dbReference type="PANTHER" id="PTHR34984:SF1">
    <property type="entry name" value="CARBON STORAGE REGULATOR"/>
    <property type="match status" value="1"/>
</dbReference>
<dbReference type="Pfam" id="PF02599">
    <property type="entry name" value="CsrA"/>
    <property type="match status" value="1"/>
</dbReference>
<dbReference type="SUPFAM" id="SSF117130">
    <property type="entry name" value="CsrA-like"/>
    <property type="match status" value="1"/>
</dbReference>
<reference key="1">
    <citation type="journal article" date="2004" name="Proc. Natl. Acad. Sci. U.S.A.">
        <title>Comparison of the genome of the oral pathogen Treponema denticola with other spirochete genomes.</title>
        <authorList>
            <person name="Seshadri R."/>
            <person name="Myers G.S.A."/>
            <person name="Tettelin H."/>
            <person name="Eisen J.A."/>
            <person name="Heidelberg J.F."/>
            <person name="Dodson R.J."/>
            <person name="Davidsen T.M."/>
            <person name="DeBoy R.T."/>
            <person name="Fouts D.E."/>
            <person name="Haft D.H."/>
            <person name="Selengut J."/>
            <person name="Ren Q."/>
            <person name="Brinkac L.M."/>
            <person name="Madupu R."/>
            <person name="Kolonay J.F."/>
            <person name="Durkin S.A."/>
            <person name="Daugherty S.C."/>
            <person name="Shetty J."/>
            <person name="Shvartsbeyn A."/>
            <person name="Gebregeorgis E."/>
            <person name="Geer K."/>
            <person name="Tsegaye G."/>
            <person name="Malek J.A."/>
            <person name="Ayodeji B."/>
            <person name="Shatsman S."/>
            <person name="McLeod M.P."/>
            <person name="Smajs D."/>
            <person name="Howell J.K."/>
            <person name="Pal S."/>
            <person name="Amin A."/>
            <person name="Vashisth P."/>
            <person name="McNeill T.Z."/>
            <person name="Xiang Q."/>
            <person name="Sodergren E."/>
            <person name="Baca E."/>
            <person name="Weinstock G.M."/>
            <person name="Norris S.J."/>
            <person name="Fraser C.M."/>
            <person name="Paulsen I.T."/>
        </authorList>
    </citation>
    <scope>NUCLEOTIDE SEQUENCE [LARGE SCALE GENOMIC DNA]</scope>
    <source>
        <strain>ATCC 35405 / DSM 14222 / CIP 103919 / JCM 8153 / KCTC 15104</strain>
    </source>
</reference>
<protein>
    <recommendedName>
        <fullName evidence="1">Translational regulator CsrA</fullName>
    </recommendedName>
</protein>
<accession>Q73K67</accession>
<feature type="chain" id="PRO_0000177093" description="Translational regulator CsrA">
    <location>
        <begin position="1"/>
        <end position="75"/>
    </location>
</feature>
<evidence type="ECO:0000255" key="1">
    <source>
        <dbReference type="HAMAP-Rule" id="MF_00167"/>
    </source>
</evidence>
<organism>
    <name type="scientific">Treponema denticola (strain ATCC 35405 / DSM 14222 / CIP 103919 / JCM 8153 / KCTC 15104)</name>
    <dbReference type="NCBI Taxonomy" id="243275"/>
    <lineage>
        <taxon>Bacteria</taxon>
        <taxon>Pseudomonadati</taxon>
        <taxon>Spirochaetota</taxon>
        <taxon>Spirochaetia</taxon>
        <taxon>Spirochaetales</taxon>
        <taxon>Treponemataceae</taxon>
        <taxon>Treponema</taxon>
    </lineage>
</organism>
<gene>
    <name evidence="1" type="primary">csrA</name>
    <name type="ordered locus">TDE_2355</name>
</gene>
<name>CSRA_TREDE</name>
<proteinExistence type="inferred from homology"/>
<keyword id="KW-1005">Bacterial flagellum biogenesis</keyword>
<keyword id="KW-0963">Cytoplasm</keyword>
<keyword id="KW-1185">Reference proteome</keyword>
<keyword id="KW-0678">Repressor</keyword>
<keyword id="KW-0694">RNA-binding</keyword>
<keyword id="KW-0810">Translation regulation</keyword>
<comment type="function">
    <text evidence="1">A translational regulator that binds mRNA to regulate translation initiation and/or mRNA stability. Usually binds in the 5'-UTR at or near the Shine-Dalgarno sequence preventing ribosome-binding, thus repressing translation. Its main target seems to be the major flagellin gene, while its function is anatagonized by FliW.</text>
</comment>
<comment type="subunit">
    <text evidence="1">Homodimer; the beta-strands of each monomer intercalate to form a hydrophobic core, while the alpha-helices form wings that extend away from the core.</text>
</comment>
<comment type="subcellular location">
    <subcellularLocation>
        <location evidence="1">Cytoplasm</location>
    </subcellularLocation>
</comment>
<comment type="similarity">
    <text evidence="1">Belongs to the CsrA/RsmA family.</text>
</comment>